<accession>Q9CWH4</accession>
<gene>
    <name type="primary">Rec114</name>
</gene>
<comment type="function">
    <text evidence="2 3 4">Required for DNA double-strand breaks (DSBs) formation in unsynapsed regions during meiotic recombination (PubMed:20551173, PubMed:27723721, PubMed:30569039). Probably acts by forming a complex with IHO1 and MEI4, which activates DSBs formation in unsynapsed regions, an essential step to ensure completion of synapsis (PubMed:27723721, PubMed:30569039). Required for spermatogenesis and oogenesis (PubMed:30569039).</text>
</comment>
<comment type="subunit">
    <text evidence="2 3 4 5 6">Part of the MCD recombinosome complex, at least composed of IHO1, REC114 and MEI4 (PubMed:27723721, PubMed:30569039). Forms a complex with MEI4; the interaction is required for MEI4 stability (PubMed:30569039). Interacts (via C-terminal domain) with MEI4 (via N-terminal domain) (PubMed:20551173, PubMed:30569039). Interacts with IHO1 (PubMed:27723721). Interacts with ANKRD31; the interaction is direct (PubMed:31000436, PubMed:31003867).</text>
</comment>
<comment type="interaction">
    <interactant intactId="EBI-9548270">
        <id>Q9CWH4</id>
    </interactant>
    <interactant intactId="EBI-9548252">
        <id>Q8BRM6</id>
        <label>Mei4</label>
    </interactant>
    <organismsDiffer>false</organismsDiffer>
    <experiments>5</experiments>
</comment>
<comment type="subcellular location">
    <subcellularLocation>
        <location evidence="4">Chromosome</location>
    </subcellularLocation>
    <text evidence="4">Located in discrete foci on the axes of meiotic chromosomes. The number of foci is highest at leptonema and decreases at zygonema.</text>
</comment>
<comment type="tissue specificity">
    <text evidence="2">Expressed in adult testis and embryonic ovary. Also expressed at low levels in liver.</text>
</comment>
<comment type="developmental stage">
    <text evidence="2">In the testis, expression is detected at 4 days postpartum (dpp) with a peak at day 10. Levels decrease between 14-18 dpp with an increase in the adult.</text>
</comment>
<comment type="similarity">
    <text evidence="7">Belongs to the REC114 family.</text>
</comment>
<name>RE114_MOUSE</name>
<organism>
    <name type="scientific">Mus musculus</name>
    <name type="common">Mouse</name>
    <dbReference type="NCBI Taxonomy" id="10090"/>
    <lineage>
        <taxon>Eukaryota</taxon>
        <taxon>Metazoa</taxon>
        <taxon>Chordata</taxon>
        <taxon>Craniata</taxon>
        <taxon>Vertebrata</taxon>
        <taxon>Euteleostomi</taxon>
        <taxon>Mammalia</taxon>
        <taxon>Eutheria</taxon>
        <taxon>Euarchontoglires</taxon>
        <taxon>Glires</taxon>
        <taxon>Rodentia</taxon>
        <taxon>Myomorpha</taxon>
        <taxon>Muroidea</taxon>
        <taxon>Muridae</taxon>
        <taxon>Murinae</taxon>
        <taxon>Mus</taxon>
        <taxon>Mus</taxon>
    </lineage>
</organism>
<evidence type="ECO:0000256" key="1">
    <source>
        <dbReference type="SAM" id="MobiDB-lite"/>
    </source>
</evidence>
<evidence type="ECO:0000269" key="2">
    <source>
    </source>
</evidence>
<evidence type="ECO:0000269" key="3">
    <source>
    </source>
</evidence>
<evidence type="ECO:0000269" key="4">
    <source>
    </source>
</evidence>
<evidence type="ECO:0000269" key="5">
    <source>
    </source>
</evidence>
<evidence type="ECO:0000269" key="6">
    <source>
    </source>
</evidence>
<evidence type="ECO:0000305" key="7"/>
<evidence type="ECO:0007744" key="8">
    <source>
        <dbReference type="PDB" id="6HFG"/>
    </source>
</evidence>
<evidence type="ECO:0007744" key="9">
    <source>
        <dbReference type="PDB" id="7QWV"/>
    </source>
</evidence>
<evidence type="ECO:0007829" key="10">
    <source>
        <dbReference type="PDB" id="7QWV"/>
    </source>
</evidence>
<feature type="chain" id="PRO_0000321519" description="Meiotic recombination protein REC114">
    <location>
        <begin position="1"/>
        <end position="259"/>
    </location>
</feature>
<feature type="region of interest" description="Disordered" evidence="1">
    <location>
        <begin position="150"/>
        <end position="175"/>
    </location>
</feature>
<feature type="region of interest" description="Interaction with MEI4" evidence="4">
    <location>
        <begin position="203"/>
        <end position="254"/>
    </location>
</feature>
<feature type="compositionally biased region" description="Polar residues" evidence="1">
    <location>
        <begin position="150"/>
        <end position="160"/>
    </location>
</feature>
<feature type="mutagenesis site" description="Strongly reduced interaction with ANKRD31." evidence="6">
    <original>R</original>
    <variation>A</variation>
    <location>
        <position position="27"/>
    </location>
</feature>
<feature type="mutagenesis site" description="Strongly reduced interaction with ANKRD31; when associated with A-104." evidence="6">
    <original>F</original>
    <variation>A</variation>
    <location>
        <position position="28"/>
    </location>
</feature>
<feature type="mutagenesis site" description="Strongly reduced interaction with ANKRD31; when associated with A-81." evidence="6">
    <original>F</original>
    <variation>A</variation>
    <location>
        <position position="74"/>
    </location>
</feature>
<feature type="mutagenesis site" description="Strongly reduced interaction with ANKRD31; when associated with A-74." evidence="6">
    <original>L</original>
    <variation>A</variation>
    <location>
        <position position="81"/>
    </location>
</feature>
<feature type="mutagenesis site" description="Strongly reduced interaction with ANKRD31; when associated with A-28." evidence="6">
    <original>L</original>
    <variation>A</variation>
    <location>
        <position position="104"/>
    </location>
</feature>
<feature type="strand" evidence="10">
    <location>
        <begin position="15"/>
        <end position="28"/>
    </location>
</feature>
<feature type="strand" evidence="10">
    <location>
        <begin position="50"/>
        <end position="55"/>
    </location>
</feature>
<feature type="turn" evidence="10">
    <location>
        <begin position="58"/>
        <end position="60"/>
    </location>
</feature>
<feature type="strand" evidence="10">
    <location>
        <begin position="63"/>
        <end position="68"/>
    </location>
</feature>
<feature type="strand" evidence="10">
    <location>
        <begin position="71"/>
        <end position="77"/>
    </location>
</feature>
<feature type="strand" evidence="10">
    <location>
        <begin position="80"/>
        <end position="86"/>
    </location>
</feature>
<feature type="helix" evidence="10">
    <location>
        <begin position="90"/>
        <end position="92"/>
    </location>
</feature>
<feature type="strand" evidence="10">
    <location>
        <begin position="94"/>
        <end position="99"/>
    </location>
</feature>
<feature type="strand" evidence="10">
    <location>
        <begin position="102"/>
        <end position="107"/>
    </location>
</feature>
<feature type="strand" evidence="10">
    <location>
        <begin position="114"/>
        <end position="120"/>
    </location>
</feature>
<feature type="helix" evidence="10">
    <location>
        <begin position="125"/>
        <end position="139"/>
    </location>
</feature>
<feature type="turn" evidence="10">
    <location>
        <begin position="140"/>
        <end position="142"/>
    </location>
</feature>
<dbReference type="EMBL" id="AK010725">
    <property type="protein sequence ID" value="BAB27143.1"/>
    <property type="molecule type" value="mRNA"/>
</dbReference>
<dbReference type="EMBL" id="AC140054">
    <property type="status" value="NOT_ANNOTATED_CDS"/>
    <property type="molecule type" value="Genomic_DNA"/>
</dbReference>
<dbReference type="EMBL" id="AC159102">
    <property type="status" value="NOT_ANNOTATED_CDS"/>
    <property type="molecule type" value="Genomic_DNA"/>
</dbReference>
<dbReference type="EMBL" id="CT030640">
    <property type="status" value="NOT_ANNOTATED_CDS"/>
    <property type="molecule type" value="Genomic_DNA"/>
</dbReference>
<dbReference type="CCDS" id="CCDS52814.1"/>
<dbReference type="RefSeq" id="NP_082874.1">
    <property type="nucleotide sequence ID" value="NM_028598.2"/>
</dbReference>
<dbReference type="PDB" id="6HFG">
    <property type="method" value="X-ray"/>
    <property type="resolution" value="2.50 A"/>
    <property type="chains" value="B=15-159"/>
</dbReference>
<dbReference type="PDB" id="6NXF">
    <property type="method" value="X-ray"/>
    <property type="resolution" value="2.79 A"/>
    <property type="chains" value="A/B=1-158"/>
</dbReference>
<dbReference type="PDB" id="7QWV">
    <property type="method" value="X-ray"/>
    <property type="resolution" value="2.26 A"/>
    <property type="chains" value="A=15-159"/>
</dbReference>
<dbReference type="PDBsum" id="6HFG"/>
<dbReference type="PDBsum" id="6NXF"/>
<dbReference type="PDBsum" id="7QWV"/>
<dbReference type="SMR" id="Q9CWH4"/>
<dbReference type="BioGRID" id="216182">
    <property type="interactions" value="1"/>
</dbReference>
<dbReference type="CORUM" id="Q9CWH4"/>
<dbReference type="FunCoup" id="Q9CWH4">
    <property type="interactions" value="3"/>
</dbReference>
<dbReference type="IntAct" id="Q9CWH4">
    <property type="interactions" value="1"/>
</dbReference>
<dbReference type="STRING" id="10090.ENSMUSP00000096271"/>
<dbReference type="PhosphoSitePlus" id="Q9CWH4"/>
<dbReference type="PaxDb" id="10090-ENSMUSP00000096271"/>
<dbReference type="Ensembl" id="ENSMUST00000098674.6">
    <property type="protein sequence ID" value="ENSMUSP00000096271.5"/>
    <property type="gene ID" value="ENSMUSG00000074269.11"/>
</dbReference>
<dbReference type="GeneID" id="73673"/>
<dbReference type="KEGG" id="mmu:73673"/>
<dbReference type="UCSC" id="uc009pxh.2">
    <property type="organism name" value="mouse"/>
</dbReference>
<dbReference type="AGR" id="MGI:1920923"/>
<dbReference type="CTD" id="283677"/>
<dbReference type="MGI" id="MGI:1920923">
    <property type="gene designation" value="Rec114"/>
</dbReference>
<dbReference type="VEuPathDB" id="HostDB:ENSMUSG00000074269"/>
<dbReference type="eggNOG" id="ENOG502S157">
    <property type="taxonomic scope" value="Eukaryota"/>
</dbReference>
<dbReference type="GeneTree" id="ENSGT00390000007235"/>
<dbReference type="HOGENOM" id="CLU_101822_0_0_1"/>
<dbReference type="InParanoid" id="Q9CWH4"/>
<dbReference type="OMA" id="RYGRFML"/>
<dbReference type="OrthoDB" id="6479200at2759"/>
<dbReference type="PhylomeDB" id="Q9CWH4"/>
<dbReference type="TreeFam" id="TF332765"/>
<dbReference type="BioGRID-ORCS" id="73673">
    <property type="hits" value="1 hit in 77 CRISPR screens"/>
</dbReference>
<dbReference type="PRO" id="PR:Q9CWH4"/>
<dbReference type="Proteomes" id="UP000000589">
    <property type="component" value="Chromosome 9"/>
</dbReference>
<dbReference type="RNAct" id="Q9CWH4">
    <property type="molecule type" value="protein"/>
</dbReference>
<dbReference type="Bgee" id="ENSMUSG00000074269">
    <property type="expression patterns" value="Expressed in blood and 116 other cell types or tissues"/>
</dbReference>
<dbReference type="ExpressionAtlas" id="Q9CWH4">
    <property type="expression patterns" value="baseline and differential"/>
</dbReference>
<dbReference type="GO" id="GO:0005694">
    <property type="term" value="C:chromosome"/>
    <property type="evidence" value="ECO:0000314"/>
    <property type="project" value="UniProtKB"/>
</dbReference>
<dbReference type="GO" id="GO:0006310">
    <property type="term" value="P:DNA recombination"/>
    <property type="evidence" value="ECO:0007669"/>
    <property type="project" value="UniProtKB-KW"/>
</dbReference>
<dbReference type="GO" id="GO:0042138">
    <property type="term" value="P:meiotic DNA double-strand break formation"/>
    <property type="evidence" value="ECO:0000314"/>
    <property type="project" value="UniProtKB"/>
</dbReference>
<dbReference type="GO" id="GO:0048477">
    <property type="term" value="P:oogenesis"/>
    <property type="evidence" value="ECO:0000314"/>
    <property type="project" value="UniProtKB"/>
</dbReference>
<dbReference type="GO" id="GO:0007283">
    <property type="term" value="P:spermatogenesis"/>
    <property type="evidence" value="ECO:0000314"/>
    <property type="project" value="UniProtKB"/>
</dbReference>
<dbReference type="InterPro" id="IPR029168">
    <property type="entry name" value="REC114L"/>
</dbReference>
<dbReference type="PANTHER" id="PTHR34921">
    <property type="entry name" value="MEIOTIC RECOMBINATION PROTEIN REC114"/>
    <property type="match status" value="1"/>
</dbReference>
<dbReference type="PANTHER" id="PTHR34921:SF1">
    <property type="entry name" value="MEIOTIC RECOMBINATION PROTEIN REC114"/>
    <property type="match status" value="1"/>
</dbReference>
<dbReference type="Pfam" id="PF15165">
    <property type="entry name" value="REC114-like"/>
    <property type="match status" value="1"/>
</dbReference>
<protein>
    <recommendedName>
        <fullName>Meiotic recombination protein REC114</fullName>
    </recommendedName>
</protein>
<keyword id="KW-0002">3D-structure</keyword>
<keyword id="KW-0158">Chromosome</keyword>
<keyword id="KW-0221">Differentiation</keyword>
<keyword id="KW-0233">DNA recombination</keyword>
<keyword id="KW-0469">Meiosis</keyword>
<keyword id="KW-0896">Oogenesis</keyword>
<keyword id="KW-1185">Reference proteome</keyword>
<keyword id="KW-0744">Spermatogenesis</keyword>
<reference key="1">
    <citation type="journal article" date="2005" name="Science">
        <title>The transcriptional landscape of the mammalian genome.</title>
        <authorList>
            <person name="Carninci P."/>
            <person name="Kasukawa T."/>
            <person name="Katayama S."/>
            <person name="Gough J."/>
            <person name="Frith M.C."/>
            <person name="Maeda N."/>
            <person name="Oyama R."/>
            <person name="Ravasi T."/>
            <person name="Lenhard B."/>
            <person name="Wells C."/>
            <person name="Kodzius R."/>
            <person name="Shimokawa K."/>
            <person name="Bajic V.B."/>
            <person name="Brenner S.E."/>
            <person name="Batalov S."/>
            <person name="Forrest A.R."/>
            <person name="Zavolan M."/>
            <person name="Davis M.J."/>
            <person name="Wilming L.G."/>
            <person name="Aidinis V."/>
            <person name="Allen J.E."/>
            <person name="Ambesi-Impiombato A."/>
            <person name="Apweiler R."/>
            <person name="Aturaliya R.N."/>
            <person name="Bailey T.L."/>
            <person name="Bansal M."/>
            <person name="Baxter L."/>
            <person name="Beisel K.W."/>
            <person name="Bersano T."/>
            <person name="Bono H."/>
            <person name="Chalk A.M."/>
            <person name="Chiu K.P."/>
            <person name="Choudhary V."/>
            <person name="Christoffels A."/>
            <person name="Clutterbuck D.R."/>
            <person name="Crowe M.L."/>
            <person name="Dalla E."/>
            <person name="Dalrymple B.P."/>
            <person name="de Bono B."/>
            <person name="Della Gatta G."/>
            <person name="di Bernardo D."/>
            <person name="Down T."/>
            <person name="Engstrom P."/>
            <person name="Fagiolini M."/>
            <person name="Faulkner G."/>
            <person name="Fletcher C.F."/>
            <person name="Fukushima T."/>
            <person name="Furuno M."/>
            <person name="Futaki S."/>
            <person name="Gariboldi M."/>
            <person name="Georgii-Hemming P."/>
            <person name="Gingeras T.R."/>
            <person name="Gojobori T."/>
            <person name="Green R.E."/>
            <person name="Gustincich S."/>
            <person name="Harbers M."/>
            <person name="Hayashi Y."/>
            <person name="Hensch T.K."/>
            <person name="Hirokawa N."/>
            <person name="Hill D."/>
            <person name="Huminiecki L."/>
            <person name="Iacono M."/>
            <person name="Ikeo K."/>
            <person name="Iwama A."/>
            <person name="Ishikawa T."/>
            <person name="Jakt M."/>
            <person name="Kanapin A."/>
            <person name="Katoh M."/>
            <person name="Kawasawa Y."/>
            <person name="Kelso J."/>
            <person name="Kitamura H."/>
            <person name="Kitano H."/>
            <person name="Kollias G."/>
            <person name="Krishnan S.P."/>
            <person name="Kruger A."/>
            <person name="Kummerfeld S.K."/>
            <person name="Kurochkin I.V."/>
            <person name="Lareau L.F."/>
            <person name="Lazarevic D."/>
            <person name="Lipovich L."/>
            <person name="Liu J."/>
            <person name="Liuni S."/>
            <person name="McWilliam S."/>
            <person name="Madan Babu M."/>
            <person name="Madera M."/>
            <person name="Marchionni L."/>
            <person name="Matsuda H."/>
            <person name="Matsuzawa S."/>
            <person name="Miki H."/>
            <person name="Mignone F."/>
            <person name="Miyake S."/>
            <person name="Morris K."/>
            <person name="Mottagui-Tabar S."/>
            <person name="Mulder N."/>
            <person name="Nakano N."/>
            <person name="Nakauchi H."/>
            <person name="Ng P."/>
            <person name="Nilsson R."/>
            <person name="Nishiguchi S."/>
            <person name="Nishikawa S."/>
            <person name="Nori F."/>
            <person name="Ohara O."/>
            <person name="Okazaki Y."/>
            <person name="Orlando V."/>
            <person name="Pang K.C."/>
            <person name="Pavan W.J."/>
            <person name="Pavesi G."/>
            <person name="Pesole G."/>
            <person name="Petrovsky N."/>
            <person name="Piazza S."/>
            <person name="Reed J."/>
            <person name="Reid J.F."/>
            <person name="Ring B.Z."/>
            <person name="Ringwald M."/>
            <person name="Rost B."/>
            <person name="Ruan Y."/>
            <person name="Salzberg S.L."/>
            <person name="Sandelin A."/>
            <person name="Schneider C."/>
            <person name="Schoenbach C."/>
            <person name="Sekiguchi K."/>
            <person name="Semple C.A."/>
            <person name="Seno S."/>
            <person name="Sessa L."/>
            <person name="Sheng Y."/>
            <person name="Shibata Y."/>
            <person name="Shimada H."/>
            <person name="Shimada K."/>
            <person name="Silva D."/>
            <person name="Sinclair B."/>
            <person name="Sperling S."/>
            <person name="Stupka E."/>
            <person name="Sugiura K."/>
            <person name="Sultana R."/>
            <person name="Takenaka Y."/>
            <person name="Taki K."/>
            <person name="Tammoja K."/>
            <person name="Tan S.L."/>
            <person name="Tang S."/>
            <person name="Taylor M.S."/>
            <person name="Tegner J."/>
            <person name="Teichmann S.A."/>
            <person name="Ueda H.R."/>
            <person name="van Nimwegen E."/>
            <person name="Verardo R."/>
            <person name="Wei C.L."/>
            <person name="Yagi K."/>
            <person name="Yamanishi H."/>
            <person name="Zabarovsky E."/>
            <person name="Zhu S."/>
            <person name="Zimmer A."/>
            <person name="Hide W."/>
            <person name="Bult C."/>
            <person name="Grimmond S.M."/>
            <person name="Teasdale R.D."/>
            <person name="Liu E.T."/>
            <person name="Brusic V."/>
            <person name="Quackenbush J."/>
            <person name="Wahlestedt C."/>
            <person name="Mattick J.S."/>
            <person name="Hume D.A."/>
            <person name="Kai C."/>
            <person name="Sasaki D."/>
            <person name="Tomaru Y."/>
            <person name="Fukuda S."/>
            <person name="Kanamori-Katayama M."/>
            <person name="Suzuki M."/>
            <person name="Aoki J."/>
            <person name="Arakawa T."/>
            <person name="Iida J."/>
            <person name="Imamura K."/>
            <person name="Itoh M."/>
            <person name="Kato T."/>
            <person name="Kawaji H."/>
            <person name="Kawagashira N."/>
            <person name="Kawashima T."/>
            <person name="Kojima M."/>
            <person name="Kondo S."/>
            <person name="Konno H."/>
            <person name="Nakano K."/>
            <person name="Ninomiya N."/>
            <person name="Nishio T."/>
            <person name="Okada M."/>
            <person name="Plessy C."/>
            <person name="Shibata K."/>
            <person name="Shiraki T."/>
            <person name="Suzuki S."/>
            <person name="Tagami M."/>
            <person name="Waki K."/>
            <person name="Watahiki A."/>
            <person name="Okamura-Oho Y."/>
            <person name="Suzuki H."/>
            <person name="Kawai J."/>
            <person name="Hayashizaki Y."/>
        </authorList>
    </citation>
    <scope>NUCLEOTIDE SEQUENCE [LARGE SCALE MRNA]</scope>
    <source>
        <strain>C57BL/6J</strain>
    </source>
</reference>
<reference key="2">
    <citation type="journal article" date="2009" name="PLoS Biol.">
        <title>Lineage-specific biology revealed by a finished genome assembly of the mouse.</title>
        <authorList>
            <person name="Church D.M."/>
            <person name="Goodstadt L."/>
            <person name="Hillier L.W."/>
            <person name="Zody M.C."/>
            <person name="Goldstein S."/>
            <person name="She X."/>
            <person name="Bult C.J."/>
            <person name="Agarwala R."/>
            <person name="Cherry J.L."/>
            <person name="DiCuccio M."/>
            <person name="Hlavina W."/>
            <person name="Kapustin Y."/>
            <person name="Meric P."/>
            <person name="Maglott D."/>
            <person name="Birtle Z."/>
            <person name="Marques A.C."/>
            <person name="Graves T."/>
            <person name="Zhou S."/>
            <person name="Teague B."/>
            <person name="Potamousis K."/>
            <person name="Churas C."/>
            <person name="Place M."/>
            <person name="Herschleb J."/>
            <person name="Runnheim R."/>
            <person name="Forrest D."/>
            <person name="Amos-Landgraf J."/>
            <person name="Schwartz D.C."/>
            <person name="Cheng Z."/>
            <person name="Lindblad-Toh K."/>
            <person name="Eichler E.E."/>
            <person name="Ponting C.P."/>
        </authorList>
    </citation>
    <scope>NUCLEOTIDE SEQUENCE [LARGE SCALE GENOMIC DNA]</scope>
    <source>
        <strain>C57BL/6J</strain>
    </source>
</reference>
<reference key="3">
    <citation type="journal article" date="2010" name="Genes Dev.">
        <title>Functional conservation of Mei4 for meiotic DNA double-strand break formation from yeasts to mice.</title>
        <authorList>
            <person name="Kumar R."/>
            <person name="Bourbon H.M."/>
            <person name="de Massy B."/>
        </authorList>
    </citation>
    <scope>FUNCTION</scope>
    <scope>INTERACTION WITH MEI4</scope>
    <scope>TISSUE SPECIFICITY</scope>
    <scope>DEVELOPMENTAL STAGE</scope>
</reference>
<reference key="4">
    <citation type="journal article" date="2016" name="Nat. Cell Biol.">
        <title>Meiotic DNA break formation requires the unsynapsed chromosome axis-binding protein IHO1 (CCDC36) in mice.</title>
        <authorList>
            <person name="Stanzione M."/>
            <person name="Baumann M."/>
            <person name="Papanikos F."/>
            <person name="Dereli I."/>
            <person name="Lange J."/>
            <person name="Ramlal A."/>
            <person name="Traenkner D."/>
            <person name="Shibuya H."/>
            <person name="de Massy B."/>
            <person name="Watanabe Y."/>
            <person name="Jasin M."/>
            <person name="Keeney S."/>
            <person name="Toth A."/>
        </authorList>
    </citation>
    <scope>FUNCTION</scope>
    <scope>IDENTIFICATION IN THE MCD RECOMBINOSOME COMPLEX</scope>
    <scope>INTERACTION WITH IHO1</scope>
</reference>
<reference key="5">
    <citation type="journal article" date="2019" name="Mol. Cell">
        <title>Mouse ANKRD31 regulates spatiotemporal patterning of meiotic recombination initiation and ensures recombination between X and Y sex chromosomes.</title>
        <authorList>
            <person name="Papanikos F."/>
            <person name="Clement J.A.J."/>
            <person name="Testa E."/>
            <person name="Ravindranathan R."/>
            <person name="Grey C."/>
            <person name="Dereli I."/>
            <person name="Bondarieva A."/>
            <person name="Valerio-Cabrera S."/>
            <person name="Stanzione M."/>
            <person name="Schleiffer A."/>
            <person name="Jansa P."/>
            <person name="Lustyk D."/>
            <person name="Fei J.F."/>
            <person name="Adams I.R."/>
            <person name="Forejt J."/>
            <person name="Barchi M."/>
            <person name="de Massy B."/>
            <person name="Toth A."/>
        </authorList>
    </citation>
    <scope>INTERACTION WITH ANKRD31</scope>
</reference>
<reference evidence="8" key="6">
    <citation type="journal article" date="2018" name="Life. Sci Alliance">
        <title>Mouse REC114 is essential for meiotic DNA double-strand break formation and forms a complex with MEI4.</title>
        <authorList>
            <person name="Kumar R."/>
            <person name="Oliver C."/>
            <person name="Brun C."/>
            <person name="Juarez-Martinez A.B."/>
            <person name="Tarabay Y."/>
            <person name="Kadlec J."/>
            <person name="de Massy B."/>
        </authorList>
    </citation>
    <scope>X-RAY CRYSTALLOGRAPHY (2.50 ANGSTROMS) OF 15-159</scope>
    <scope>FUNCTION</scope>
    <scope>IDENTIFICATION IN A COMPLEX WITH MEI4</scope>
    <scope>INTERACTION WITH MEI4</scope>
    <scope>SUBCELLULAR LOCATION</scope>
</reference>
<reference key="7">
    <citation type="journal article" date="2019" name="Mol. Cell">
        <title>REC114 partner ANKRD31 controls number, timing, and location of meiotic DNA breaks.</title>
        <authorList>
            <person name="Boekhout M."/>
            <person name="Karasu M.E."/>
            <person name="Wang J."/>
            <person name="Acquaviva L."/>
            <person name="Pratto F."/>
            <person name="Brick K."/>
            <person name="Eng D.Y."/>
            <person name="Xu J."/>
            <person name="Camerini-Otero R.D."/>
            <person name="Patel D.J."/>
            <person name="Keeney S."/>
        </authorList>
    </citation>
    <scope>X-RAY CRYSTALLOGRAPHY (2.79 ANGSTROMS) OF 1-158 IN COMPLEX WITH ANKRD31</scope>
    <scope>INTERACTION WITH ANKRD31</scope>
    <scope>MUTAGENESIS OF ARG-27; PHE-28; PHE-74; LEU-81 AND LEU-104</scope>
</reference>
<reference evidence="9" key="8">
    <citation type="submission" date="2022-01" db="PDB data bank">
        <title>Crystal structure of the REC114-TOPOVIBL complex.</title>
        <authorList>
            <person name="Juarez-Martinez A.B."/>
            <person name="Robert T."/>
            <person name="de Massy B."/>
            <person name="Kadlec J."/>
        </authorList>
    </citation>
    <scope>X-RAY CRYSTALLOGRAPHY (2.26 ANGSTROMS) OF 15-159</scope>
</reference>
<sequence>MSEAGNVASGLGLPGEVSQWSLKRYGRFMLLDNVGSPGPSSEAAAAGSPTWKVFESSEESGSLVLTIVVSGHFFISQGQTLLEGFSLIGSKNWLKIVRRMDCLLFGTTIKNKSRMFRVQFSGESKEEALERCCGCVQTLAQYVTVQEPDSTTQELQQSQGPREAGESQGKDPLQQGPSLTLEQHVCMAAGAGVLQERTSVTHRAQSILAPEKLTLAYEGSSWGTEELGPFLRLCLMDQNFPAFVEEVEKELKKITGLRN</sequence>
<proteinExistence type="evidence at protein level"/>